<protein>
    <recommendedName>
        <fullName evidence="2">NADH-quinone oxidoreductase subunit B 2</fullName>
        <ecNumber evidence="2">7.1.1.-</ecNumber>
    </recommendedName>
    <alternativeName>
        <fullName evidence="2">NADH dehydrogenase I subunit B 2</fullName>
    </alternativeName>
    <alternativeName>
        <fullName evidence="2">NDH-1 subunit B 2</fullName>
    </alternativeName>
</protein>
<proteinExistence type="inferred from homology"/>
<gene>
    <name evidence="2" type="primary">nuoB2</name>
    <name type="ordered locus">Acid_5318</name>
</gene>
<name>NUOB2_SOLUE</name>
<keyword id="KW-0004">4Fe-4S</keyword>
<keyword id="KW-0997">Cell inner membrane</keyword>
<keyword id="KW-1003">Cell membrane</keyword>
<keyword id="KW-0408">Iron</keyword>
<keyword id="KW-0411">Iron-sulfur</keyword>
<keyword id="KW-0472">Membrane</keyword>
<keyword id="KW-0479">Metal-binding</keyword>
<keyword id="KW-0520">NAD</keyword>
<keyword id="KW-0874">Quinone</keyword>
<keyword id="KW-1278">Translocase</keyword>
<keyword id="KW-0813">Transport</keyword>
<keyword id="KW-0830">Ubiquinone</keyword>
<comment type="function">
    <text evidence="1">NDH-1 shuttles electrons from NADH, via FMN and iron-sulfur (Fe-S) centers, to quinones in the respiratory chain. Couples the redox reaction to proton translocation (for every two electrons transferred, four hydrogen ions are translocated across the cytoplasmic membrane), and thus conserves the redox energy in a proton gradient (By similarity).</text>
</comment>
<comment type="catalytic activity">
    <reaction evidence="2">
        <text>a quinone + NADH + 5 H(+)(in) = a quinol + NAD(+) + 4 H(+)(out)</text>
        <dbReference type="Rhea" id="RHEA:57888"/>
        <dbReference type="ChEBI" id="CHEBI:15378"/>
        <dbReference type="ChEBI" id="CHEBI:24646"/>
        <dbReference type="ChEBI" id="CHEBI:57540"/>
        <dbReference type="ChEBI" id="CHEBI:57945"/>
        <dbReference type="ChEBI" id="CHEBI:132124"/>
    </reaction>
</comment>
<comment type="cofactor">
    <cofactor evidence="2">
        <name>[4Fe-4S] cluster</name>
        <dbReference type="ChEBI" id="CHEBI:49883"/>
    </cofactor>
    <text evidence="2">Binds 1 [4Fe-4S] cluster.</text>
</comment>
<comment type="subunit">
    <text evidence="2">NDH-1 is composed of 14 different subunits. Subunits NuoB, C, D, E, F, and G constitute the peripheral sector of the complex.</text>
</comment>
<comment type="subcellular location">
    <subcellularLocation>
        <location evidence="2">Cell inner membrane</location>
        <topology evidence="2">Peripheral membrane protein</topology>
        <orientation evidence="2">Cytoplasmic side</orientation>
    </subcellularLocation>
</comment>
<comment type="similarity">
    <text evidence="2">Belongs to the complex I 20 kDa subunit family.</text>
</comment>
<organism>
    <name type="scientific">Solibacter usitatus (strain Ellin6076)</name>
    <dbReference type="NCBI Taxonomy" id="234267"/>
    <lineage>
        <taxon>Bacteria</taxon>
        <taxon>Pseudomonadati</taxon>
        <taxon>Acidobacteriota</taxon>
        <taxon>Terriglobia</taxon>
        <taxon>Bryobacterales</taxon>
        <taxon>Solibacteraceae</taxon>
        <taxon>Candidatus Solibacter</taxon>
    </lineage>
</organism>
<accession>Q01VP7</accession>
<evidence type="ECO:0000250" key="1"/>
<evidence type="ECO:0000255" key="2">
    <source>
        <dbReference type="HAMAP-Rule" id="MF_01356"/>
    </source>
</evidence>
<dbReference type="EC" id="7.1.1.-" evidence="2"/>
<dbReference type="EMBL" id="CP000473">
    <property type="protein sequence ID" value="ABJ86268.1"/>
    <property type="molecule type" value="Genomic_DNA"/>
</dbReference>
<dbReference type="SMR" id="Q01VP7"/>
<dbReference type="FunCoup" id="Q01VP7">
    <property type="interactions" value="455"/>
</dbReference>
<dbReference type="STRING" id="234267.Acid_5318"/>
<dbReference type="KEGG" id="sus:Acid_5318"/>
<dbReference type="eggNOG" id="COG0377">
    <property type="taxonomic scope" value="Bacteria"/>
</dbReference>
<dbReference type="HOGENOM" id="CLU_055737_7_3_0"/>
<dbReference type="InParanoid" id="Q01VP7"/>
<dbReference type="OrthoDB" id="9786737at2"/>
<dbReference type="GO" id="GO:0005886">
    <property type="term" value="C:plasma membrane"/>
    <property type="evidence" value="ECO:0007669"/>
    <property type="project" value="UniProtKB-SubCell"/>
</dbReference>
<dbReference type="GO" id="GO:0045271">
    <property type="term" value="C:respiratory chain complex I"/>
    <property type="evidence" value="ECO:0007669"/>
    <property type="project" value="TreeGrafter"/>
</dbReference>
<dbReference type="GO" id="GO:0051539">
    <property type="term" value="F:4 iron, 4 sulfur cluster binding"/>
    <property type="evidence" value="ECO:0007669"/>
    <property type="project" value="UniProtKB-KW"/>
</dbReference>
<dbReference type="GO" id="GO:0005506">
    <property type="term" value="F:iron ion binding"/>
    <property type="evidence" value="ECO:0007669"/>
    <property type="project" value="UniProtKB-UniRule"/>
</dbReference>
<dbReference type="GO" id="GO:0008137">
    <property type="term" value="F:NADH dehydrogenase (ubiquinone) activity"/>
    <property type="evidence" value="ECO:0007669"/>
    <property type="project" value="InterPro"/>
</dbReference>
<dbReference type="GO" id="GO:0050136">
    <property type="term" value="F:NADH:ubiquinone reductase (non-electrogenic) activity"/>
    <property type="evidence" value="ECO:0007669"/>
    <property type="project" value="UniProtKB-UniRule"/>
</dbReference>
<dbReference type="GO" id="GO:0048038">
    <property type="term" value="F:quinone binding"/>
    <property type="evidence" value="ECO:0007669"/>
    <property type="project" value="UniProtKB-KW"/>
</dbReference>
<dbReference type="GO" id="GO:0009060">
    <property type="term" value="P:aerobic respiration"/>
    <property type="evidence" value="ECO:0007669"/>
    <property type="project" value="TreeGrafter"/>
</dbReference>
<dbReference type="GO" id="GO:0015990">
    <property type="term" value="P:electron transport coupled proton transport"/>
    <property type="evidence" value="ECO:0007669"/>
    <property type="project" value="TreeGrafter"/>
</dbReference>
<dbReference type="FunFam" id="3.40.50.12280:FF:000002">
    <property type="entry name" value="NADH-quinone oxidoreductase subunit B"/>
    <property type="match status" value="1"/>
</dbReference>
<dbReference type="Gene3D" id="3.40.50.12280">
    <property type="match status" value="1"/>
</dbReference>
<dbReference type="HAMAP" id="MF_01356">
    <property type="entry name" value="NDH1_NuoB"/>
    <property type="match status" value="1"/>
</dbReference>
<dbReference type="InterPro" id="IPR006137">
    <property type="entry name" value="NADH_UbQ_OxRdtase-like_20kDa"/>
</dbReference>
<dbReference type="InterPro" id="IPR006138">
    <property type="entry name" value="NADH_UQ_OxRdtase_20Kd_su"/>
</dbReference>
<dbReference type="NCBIfam" id="TIGR01957">
    <property type="entry name" value="nuoB_fam"/>
    <property type="match status" value="1"/>
</dbReference>
<dbReference type="NCBIfam" id="NF005012">
    <property type="entry name" value="PRK06411.1"/>
    <property type="match status" value="1"/>
</dbReference>
<dbReference type="PANTHER" id="PTHR11995">
    <property type="entry name" value="NADH DEHYDROGENASE"/>
    <property type="match status" value="1"/>
</dbReference>
<dbReference type="PANTHER" id="PTHR11995:SF14">
    <property type="entry name" value="NADH DEHYDROGENASE [UBIQUINONE] IRON-SULFUR PROTEIN 7, MITOCHONDRIAL"/>
    <property type="match status" value="1"/>
</dbReference>
<dbReference type="Pfam" id="PF01058">
    <property type="entry name" value="Oxidored_q6"/>
    <property type="match status" value="1"/>
</dbReference>
<dbReference type="SUPFAM" id="SSF56770">
    <property type="entry name" value="HydA/Nqo6-like"/>
    <property type="match status" value="1"/>
</dbReference>
<reference key="1">
    <citation type="journal article" date="2009" name="Appl. Environ. Microbiol.">
        <title>Three genomes from the phylum Acidobacteria provide insight into the lifestyles of these microorganisms in soils.</title>
        <authorList>
            <person name="Ward N.L."/>
            <person name="Challacombe J.F."/>
            <person name="Janssen P.H."/>
            <person name="Henrissat B."/>
            <person name="Coutinho P.M."/>
            <person name="Wu M."/>
            <person name="Xie G."/>
            <person name="Haft D.H."/>
            <person name="Sait M."/>
            <person name="Badger J."/>
            <person name="Barabote R.D."/>
            <person name="Bradley B."/>
            <person name="Brettin T.S."/>
            <person name="Brinkac L.M."/>
            <person name="Bruce D."/>
            <person name="Creasy T."/>
            <person name="Daugherty S.C."/>
            <person name="Davidsen T.M."/>
            <person name="DeBoy R.T."/>
            <person name="Detter J.C."/>
            <person name="Dodson R.J."/>
            <person name="Durkin A.S."/>
            <person name="Ganapathy A."/>
            <person name="Gwinn-Giglio M."/>
            <person name="Han C.S."/>
            <person name="Khouri H."/>
            <person name="Kiss H."/>
            <person name="Kothari S.P."/>
            <person name="Madupu R."/>
            <person name="Nelson K.E."/>
            <person name="Nelson W.C."/>
            <person name="Paulsen I."/>
            <person name="Penn K."/>
            <person name="Ren Q."/>
            <person name="Rosovitz M.J."/>
            <person name="Selengut J.D."/>
            <person name="Shrivastava S."/>
            <person name="Sullivan S.A."/>
            <person name="Tapia R."/>
            <person name="Thompson L.S."/>
            <person name="Watkins K.L."/>
            <person name="Yang Q."/>
            <person name="Yu C."/>
            <person name="Zafar N."/>
            <person name="Zhou L."/>
            <person name="Kuske C.R."/>
        </authorList>
    </citation>
    <scope>NUCLEOTIDE SEQUENCE [LARGE SCALE GENOMIC DNA]</scope>
    <source>
        <strain>Ellin6076</strain>
    </source>
</reference>
<feature type="chain" id="PRO_0000358481" description="NADH-quinone oxidoreductase subunit B 2">
    <location>
        <begin position="1"/>
        <end position="184"/>
    </location>
</feature>
<feature type="binding site" evidence="2">
    <location>
        <position position="59"/>
    </location>
    <ligand>
        <name>[4Fe-4S] cluster</name>
        <dbReference type="ChEBI" id="CHEBI:49883"/>
    </ligand>
</feature>
<feature type="binding site" evidence="2">
    <location>
        <position position="60"/>
    </location>
    <ligand>
        <name>[4Fe-4S] cluster</name>
        <dbReference type="ChEBI" id="CHEBI:49883"/>
    </ligand>
</feature>
<feature type="binding site" evidence="2">
    <location>
        <position position="125"/>
    </location>
    <ligand>
        <name>[4Fe-4S] cluster</name>
        <dbReference type="ChEBI" id="CHEBI:49883"/>
    </ligand>
</feature>
<feature type="binding site" evidence="2">
    <location>
        <position position="153"/>
    </location>
    <ligand>
        <name>[4Fe-4S] cluster</name>
        <dbReference type="ChEBI" id="CHEBI:49883"/>
    </ligand>
</feature>
<sequence>MEKPMASSGPAELFTRVDDYSVANAAAAANEGIVMTTLDAAVNWARKNSIWPMTFGLACCAIEMMSMSASRFDIARFGAEVFRGSPRQSDLMIIAGRVSNKMAPVIRHLYQQMPEPKWAISMGACATSTGVFNNYALIPVNQVIPIDVFVPGCPPRPEQLIYALMMLQEKIKNQSGTVKSVLNL</sequence>